<proteinExistence type="inferred from homology"/>
<sequence length="513" mass="61200">MAKFEGYLEKQKSRQQYFVYPLLFQEYIYAFAHDYVLNGSEPVEIIGCNNKKFSSLLVKRLIIRMYQQNFWINSVNHSNQDRLLDHSNHFFSEFYSQILSEGFAIVVEIPFSLGQLSCPEEKEIPKFQNLRSIHSIFPFLEDKFLHLHYLSHIEIPYPIHFEILVRLLEXRIQDVPSLHLLRFFLNYYSIWNSLITSMKSVFLLKKENKRLFRFLYNSYVSEYEFFLLFLPKQSSCLRLTSSGTFLQRIHFSVKMEHFGVMYPGFSRKTIWFFMDPLMHYVRYQGKAIFASKGTFFLKKKWKSYLVNFPQYPSSSWTQPQRIRLNQLTRSCFDFLGYFSSVPINTFLVRNQMLENFFLIDTRMRKFDTTAPATPLIGSLSKAQFCTGLGHPISKPIWTDLSDWDILDRFGRICRNLFHYHSGSSKKRTLYRLKYILRLSCARTLARKHKSTVRTFMQRLGSVFLEEFFTEEEQVFSLMFAKTTHFSFHGSHSERIWYLDIIRIDDLVNPLTLN</sequence>
<geneLocation type="chloroplast"/>
<feature type="chain" id="PRO_0000143370" description="Maturase K">
    <location>
        <begin position="1"/>
        <end position="513"/>
    </location>
</feature>
<protein>
    <recommendedName>
        <fullName evidence="1">Maturase K</fullName>
    </recommendedName>
    <alternativeName>
        <fullName evidence="1">Intron maturase</fullName>
    </alternativeName>
</protein>
<organism>
    <name type="scientific">Eleusine indica</name>
    <name type="common">Goosegrass</name>
    <name type="synonym">Cynosurus indicus</name>
    <dbReference type="NCBI Taxonomy" id="29674"/>
    <lineage>
        <taxon>Eukaryota</taxon>
        <taxon>Viridiplantae</taxon>
        <taxon>Streptophyta</taxon>
        <taxon>Embryophyta</taxon>
        <taxon>Tracheophyta</taxon>
        <taxon>Spermatophyta</taxon>
        <taxon>Magnoliopsida</taxon>
        <taxon>Liliopsida</taxon>
        <taxon>Poales</taxon>
        <taxon>Poaceae</taxon>
        <taxon>PACMAD clade</taxon>
        <taxon>Chloridoideae</taxon>
        <taxon>Cynodonteae</taxon>
        <taxon>Eleusininae</taxon>
        <taxon>Eleusine</taxon>
    </lineage>
</organism>
<gene>
    <name evidence="1" type="primary">matK</name>
</gene>
<accession>Q9TIB6</accession>
<keyword id="KW-0150">Chloroplast</keyword>
<keyword id="KW-0507">mRNA processing</keyword>
<keyword id="KW-0934">Plastid</keyword>
<keyword id="KW-0694">RNA-binding</keyword>
<keyword id="KW-0819">tRNA processing</keyword>
<evidence type="ECO:0000255" key="1">
    <source>
        <dbReference type="HAMAP-Rule" id="MF_01390"/>
    </source>
</evidence>
<dbReference type="EMBL" id="AF144580">
    <property type="protein sequence ID" value="AAF20336.1"/>
    <property type="molecule type" value="Genomic_DNA"/>
</dbReference>
<dbReference type="GO" id="GO:0009507">
    <property type="term" value="C:chloroplast"/>
    <property type="evidence" value="ECO:0007669"/>
    <property type="project" value="UniProtKB-SubCell"/>
</dbReference>
<dbReference type="GO" id="GO:0003723">
    <property type="term" value="F:RNA binding"/>
    <property type="evidence" value="ECO:0007669"/>
    <property type="project" value="UniProtKB-KW"/>
</dbReference>
<dbReference type="GO" id="GO:0006397">
    <property type="term" value="P:mRNA processing"/>
    <property type="evidence" value="ECO:0007669"/>
    <property type="project" value="UniProtKB-KW"/>
</dbReference>
<dbReference type="GO" id="GO:0008380">
    <property type="term" value="P:RNA splicing"/>
    <property type="evidence" value="ECO:0007669"/>
    <property type="project" value="UniProtKB-UniRule"/>
</dbReference>
<dbReference type="GO" id="GO:0008033">
    <property type="term" value="P:tRNA processing"/>
    <property type="evidence" value="ECO:0007669"/>
    <property type="project" value="UniProtKB-KW"/>
</dbReference>
<dbReference type="HAMAP" id="MF_01390">
    <property type="entry name" value="MatK"/>
    <property type="match status" value="1"/>
</dbReference>
<dbReference type="InterPro" id="IPR024937">
    <property type="entry name" value="Domain_X"/>
</dbReference>
<dbReference type="InterPro" id="IPR002866">
    <property type="entry name" value="Maturase_MatK"/>
</dbReference>
<dbReference type="InterPro" id="IPR024942">
    <property type="entry name" value="Maturase_MatK_N"/>
</dbReference>
<dbReference type="PANTHER" id="PTHR34811">
    <property type="entry name" value="MATURASE K"/>
    <property type="match status" value="1"/>
</dbReference>
<dbReference type="PANTHER" id="PTHR34811:SF1">
    <property type="entry name" value="MATURASE K"/>
    <property type="match status" value="1"/>
</dbReference>
<dbReference type="Pfam" id="PF01348">
    <property type="entry name" value="Intron_maturas2"/>
    <property type="match status" value="1"/>
</dbReference>
<dbReference type="Pfam" id="PF01824">
    <property type="entry name" value="MatK_N"/>
    <property type="match status" value="1"/>
</dbReference>
<comment type="function">
    <text evidence="1">Usually encoded in the trnK tRNA gene intron. Probably assists in splicing its own and other chloroplast group II introns.</text>
</comment>
<comment type="subcellular location">
    <subcellularLocation>
        <location>Plastid</location>
        <location>Chloroplast</location>
    </subcellularLocation>
</comment>
<comment type="similarity">
    <text evidence="1">Belongs to the intron maturase 2 family. MatK subfamily.</text>
</comment>
<name>MATK_ELEIN</name>
<reference key="1">
    <citation type="submission" date="1999-04" db="EMBL/GenBank/DDBJ databases">
        <title>Phylogenetic relationships in subfamily Chloridoideae (Poaceae) based on matK sequences: a preliminary assessment.</title>
        <authorList>
            <person name="Hilu K.W."/>
            <person name="Alice L.A."/>
        </authorList>
    </citation>
    <scope>NUCLEOTIDE SEQUENCE [GENOMIC DNA]</scope>
</reference>